<dbReference type="EC" id="5.3.1.1" evidence="1"/>
<dbReference type="EMBL" id="CP001101">
    <property type="protein sequence ID" value="ACE03853.1"/>
    <property type="molecule type" value="Genomic_DNA"/>
</dbReference>
<dbReference type="SMR" id="B3EPH5"/>
<dbReference type="STRING" id="331678.Cphamn1_0908"/>
<dbReference type="KEGG" id="cpb:Cphamn1_0908"/>
<dbReference type="eggNOG" id="COG0149">
    <property type="taxonomic scope" value="Bacteria"/>
</dbReference>
<dbReference type="HOGENOM" id="CLU_024251_2_3_10"/>
<dbReference type="OrthoDB" id="9809429at2"/>
<dbReference type="UniPathway" id="UPA00109">
    <property type="reaction ID" value="UER00189"/>
</dbReference>
<dbReference type="UniPathway" id="UPA00138"/>
<dbReference type="GO" id="GO:0005829">
    <property type="term" value="C:cytosol"/>
    <property type="evidence" value="ECO:0007669"/>
    <property type="project" value="TreeGrafter"/>
</dbReference>
<dbReference type="GO" id="GO:0004807">
    <property type="term" value="F:triose-phosphate isomerase activity"/>
    <property type="evidence" value="ECO:0007669"/>
    <property type="project" value="UniProtKB-UniRule"/>
</dbReference>
<dbReference type="GO" id="GO:0006094">
    <property type="term" value="P:gluconeogenesis"/>
    <property type="evidence" value="ECO:0007669"/>
    <property type="project" value="UniProtKB-UniRule"/>
</dbReference>
<dbReference type="GO" id="GO:0046166">
    <property type="term" value="P:glyceraldehyde-3-phosphate biosynthetic process"/>
    <property type="evidence" value="ECO:0007669"/>
    <property type="project" value="TreeGrafter"/>
</dbReference>
<dbReference type="GO" id="GO:0019563">
    <property type="term" value="P:glycerol catabolic process"/>
    <property type="evidence" value="ECO:0007669"/>
    <property type="project" value="TreeGrafter"/>
</dbReference>
<dbReference type="GO" id="GO:0006096">
    <property type="term" value="P:glycolytic process"/>
    <property type="evidence" value="ECO:0007669"/>
    <property type="project" value="UniProtKB-UniRule"/>
</dbReference>
<dbReference type="CDD" id="cd00311">
    <property type="entry name" value="TIM"/>
    <property type="match status" value="1"/>
</dbReference>
<dbReference type="FunFam" id="3.20.20.70:FF:000016">
    <property type="entry name" value="Triosephosphate isomerase"/>
    <property type="match status" value="1"/>
</dbReference>
<dbReference type="Gene3D" id="3.20.20.70">
    <property type="entry name" value="Aldolase class I"/>
    <property type="match status" value="1"/>
</dbReference>
<dbReference type="HAMAP" id="MF_00147_B">
    <property type="entry name" value="TIM_B"/>
    <property type="match status" value="1"/>
</dbReference>
<dbReference type="InterPro" id="IPR013785">
    <property type="entry name" value="Aldolase_TIM"/>
</dbReference>
<dbReference type="InterPro" id="IPR035990">
    <property type="entry name" value="TIM_sf"/>
</dbReference>
<dbReference type="InterPro" id="IPR022896">
    <property type="entry name" value="TrioseP_Isoase_bac/euk"/>
</dbReference>
<dbReference type="InterPro" id="IPR000652">
    <property type="entry name" value="Triosephosphate_isomerase"/>
</dbReference>
<dbReference type="InterPro" id="IPR020861">
    <property type="entry name" value="Triosephosphate_isomerase_AS"/>
</dbReference>
<dbReference type="NCBIfam" id="TIGR00419">
    <property type="entry name" value="tim"/>
    <property type="match status" value="1"/>
</dbReference>
<dbReference type="PANTHER" id="PTHR21139">
    <property type="entry name" value="TRIOSEPHOSPHATE ISOMERASE"/>
    <property type="match status" value="1"/>
</dbReference>
<dbReference type="PANTHER" id="PTHR21139:SF42">
    <property type="entry name" value="TRIOSEPHOSPHATE ISOMERASE"/>
    <property type="match status" value="1"/>
</dbReference>
<dbReference type="Pfam" id="PF00121">
    <property type="entry name" value="TIM"/>
    <property type="match status" value="1"/>
</dbReference>
<dbReference type="SUPFAM" id="SSF51351">
    <property type="entry name" value="Triosephosphate isomerase (TIM)"/>
    <property type="match status" value="1"/>
</dbReference>
<dbReference type="PROSITE" id="PS00171">
    <property type="entry name" value="TIM_1"/>
    <property type="match status" value="1"/>
</dbReference>
<dbReference type="PROSITE" id="PS51440">
    <property type="entry name" value="TIM_2"/>
    <property type="match status" value="1"/>
</dbReference>
<reference key="1">
    <citation type="submission" date="2008-06" db="EMBL/GenBank/DDBJ databases">
        <title>Complete sequence of Chlorobium phaeobacteroides BS1.</title>
        <authorList>
            <consortium name="US DOE Joint Genome Institute"/>
            <person name="Lucas S."/>
            <person name="Copeland A."/>
            <person name="Lapidus A."/>
            <person name="Glavina del Rio T."/>
            <person name="Dalin E."/>
            <person name="Tice H."/>
            <person name="Bruce D."/>
            <person name="Goodwin L."/>
            <person name="Pitluck S."/>
            <person name="Schmutz J."/>
            <person name="Larimer F."/>
            <person name="Land M."/>
            <person name="Hauser L."/>
            <person name="Kyrpides N."/>
            <person name="Ovchinnikova G."/>
            <person name="Li T."/>
            <person name="Liu Z."/>
            <person name="Zhao F."/>
            <person name="Overmann J."/>
            <person name="Bryant D.A."/>
            <person name="Richardson P."/>
        </authorList>
    </citation>
    <scope>NUCLEOTIDE SEQUENCE [LARGE SCALE GENOMIC DNA]</scope>
    <source>
        <strain>BS1</strain>
    </source>
</reference>
<accession>B3EPH5</accession>
<gene>
    <name evidence="1" type="primary">tpiA</name>
    <name type="ordered locus">Cphamn1_0908</name>
</gene>
<sequence length="250" mass="26522">MRKKIVVGNWKMNKNVAEGVALASSILENLDGGKMACEVGIAPAYPVLSEVGRVIEGSDICLVAQNCHYEDEGAYTGEVSVRMLDSLGCSYIIVGHSERRQYFGETNRTVNLRLKKALEGGMRVILCIGETLEEREAGVTDAIVTAQVREGLADIEDLGNVVLAYEPVWAIGTGKTATPEQADAVHASIRATISDMYGEADAEDIRIQYGGSVKPSNAVELFGMPNIDGGLIGGASLKADDFVAIVNAAG</sequence>
<name>TPIS_CHLPB</name>
<protein>
    <recommendedName>
        <fullName evidence="1">Triosephosphate isomerase</fullName>
        <shortName evidence="1">TIM</shortName>
        <shortName evidence="1">TPI</shortName>
        <ecNumber evidence="1">5.3.1.1</ecNumber>
    </recommendedName>
    <alternativeName>
        <fullName evidence="1">Triose-phosphate isomerase</fullName>
    </alternativeName>
</protein>
<feature type="chain" id="PRO_1000096482" description="Triosephosphate isomerase">
    <location>
        <begin position="1"/>
        <end position="250"/>
    </location>
</feature>
<feature type="active site" description="Electrophile" evidence="1">
    <location>
        <position position="96"/>
    </location>
</feature>
<feature type="active site" description="Proton acceptor" evidence="1">
    <location>
        <position position="166"/>
    </location>
</feature>
<feature type="binding site" evidence="1">
    <location>
        <begin position="9"/>
        <end position="11"/>
    </location>
    <ligand>
        <name>substrate</name>
    </ligand>
</feature>
<feature type="binding site" evidence="1">
    <location>
        <position position="172"/>
    </location>
    <ligand>
        <name>substrate</name>
    </ligand>
</feature>
<feature type="binding site" evidence="1">
    <location>
        <position position="212"/>
    </location>
    <ligand>
        <name>substrate</name>
    </ligand>
</feature>
<feature type="binding site" evidence="1">
    <location>
        <begin position="233"/>
        <end position="234"/>
    </location>
    <ligand>
        <name>substrate</name>
    </ligand>
</feature>
<proteinExistence type="inferred from homology"/>
<comment type="function">
    <text evidence="1">Involved in the gluconeogenesis. Catalyzes stereospecifically the conversion of dihydroxyacetone phosphate (DHAP) to D-glyceraldehyde-3-phosphate (G3P).</text>
</comment>
<comment type="catalytic activity">
    <reaction evidence="1">
        <text>D-glyceraldehyde 3-phosphate = dihydroxyacetone phosphate</text>
        <dbReference type="Rhea" id="RHEA:18585"/>
        <dbReference type="ChEBI" id="CHEBI:57642"/>
        <dbReference type="ChEBI" id="CHEBI:59776"/>
        <dbReference type="EC" id="5.3.1.1"/>
    </reaction>
</comment>
<comment type="pathway">
    <text evidence="1">Carbohydrate biosynthesis; gluconeogenesis.</text>
</comment>
<comment type="pathway">
    <text evidence="1">Carbohydrate degradation; glycolysis; D-glyceraldehyde 3-phosphate from glycerone phosphate: step 1/1.</text>
</comment>
<comment type="subunit">
    <text evidence="1">Homodimer.</text>
</comment>
<comment type="subcellular location">
    <subcellularLocation>
        <location evidence="1">Cytoplasm</location>
    </subcellularLocation>
</comment>
<comment type="similarity">
    <text evidence="1">Belongs to the triosephosphate isomerase family.</text>
</comment>
<keyword id="KW-0963">Cytoplasm</keyword>
<keyword id="KW-0312">Gluconeogenesis</keyword>
<keyword id="KW-0324">Glycolysis</keyword>
<keyword id="KW-0413">Isomerase</keyword>
<organism>
    <name type="scientific">Chlorobium phaeobacteroides (strain BS1)</name>
    <dbReference type="NCBI Taxonomy" id="331678"/>
    <lineage>
        <taxon>Bacteria</taxon>
        <taxon>Pseudomonadati</taxon>
        <taxon>Chlorobiota</taxon>
        <taxon>Chlorobiia</taxon>
        <taxon>Chlorobiales</taxon>
        <taxon>Chlorobiaceae</taxon>
        <taxon>Chlorobium/Pelodictyon group</taxon>
        <taxon>Chlorobium</taxon>
    </lineage>
</organism>
<evidence type="ECO:0000255" key="1">
    <source>
        <dbReference type="HAMAP-Rule" id="MF_00147"/>
    </source>
</evidence>